<organism>
    <name type="scientific">Methylobacillus flagellatus (strain ATCC 51484 / DSM 6875 / VKM B-1610 / KT)</name>
    <dbReference type="NCBI Taxonomy" id="265072"/>
    <lineage>
        <taxon>Bacteria</taxon>
        <taxon>Pseudomonadati</taxon>
        <taxon>Pseudomonadota</taxon>
        <taxon>Betaproteobacteria</taxon>
        <taxon>Nitrosomonadales</taxon>
        <taxon>Methylophilaceae</taxon>
        <taxon>Methylobacillus</taxon>
    </lineage>
</organism>
<protein>
    <recommendedName>
        <fullName evidence="1">Cysteine desulfurase IscS</fullName>
        <ecNumber evidence="1">2.8.1.7</ecNumber>
    </recommendedName>
</protein>
<evidence type="ECO:0000255" key="1">
    <source>
        <dbReference type="HAMAP-Rule" id="MF_00331"/>
    </source>
</evidence>
<gene>
    <name evidence="1" type="primary">iscS</name>
    <name type="ordered locus">Mfla_0808</name>
</gene>
<proteinExistence type="inferred from homology"/>
<reference key="1">
    <citation type="submission" date="2006-03" db="EMBL/GenBank/DDBJ databases">
        <title>Complete sequence of Methylobacillus flagellatus KT.</title>
        <authorList>
            <consortium name="US DOE Joint Genome Institute"/>
            <person name="Copeland A."/>
            <person name="Lucas S."/>
            <person name="Lapidus A."/>
            <person name="Barry K."/>
            <person name="Detter J.C."/>
            <person name="Glavina del Rio T."/>
            <person name="Hammon N."/>
            <person name="Israni S."/>
            <person name="Dalin E."/>
            <person name="Tice H."/>
            <person name="Pitluck S."/>
            <person name="Brettin T."/>
            <person name="Bruce D."/>
            <person name="Han C."/>
            <person name="Tapia R."/>
            <person name="Saunders E."/>
            <person name="Gilna P."/>
            <person name="Schmutz J."/>
            <person name="Larimer F."/>
            <person name="Land M."/>
            <person name="Kyrpides N."/>
            <person name="Anderson I."/>
            <person name="Richardson P."/>
        </authorList>
    </citation>
    <scope>NUCLEOTIDE SEQUENCE [LARGE SCALE GENOMIC DNA]</scope>
    <source>
        <strain>ATCC 51484 / DSM 6875 / VKM B-1610 / KT</strain>
    </source>
</reference>
<feature type="chain" id="PRO_1000133119" description="Cysteine desulfurase IscS">
    <location>
        <begin position="1"/>
        <end position="405"/>
    </location>
</feature>
<feature type="active site" description="Cysteine persulfide intermediate" evidence="1">
    <location>
        <position position="329"/>
    </location>
</feature>
<feature type="binding site" evidence="1">
    <location>
        <begin position="75"/>
        <end position="76"/>
    </location>
    <ligand>
        <name>pyridoxal 5'-phosphate</name>
        <dbReference type="ChEBI" id="CHEBI:597326"/>
    </ligand>
</feature>
<feature type="binding site" evidence="1">
    <location>
        <position position="156"/>
    </location>
    <ligand>
        <name>pyridoxal 5'-phosphate</name>
        <dbReference type="ChEBI" id="CHEBI:597326"/>
    </ligand>
</feature>
<feature type="binding site" evidence="1">
    <location>
        <position position="184"/>
    </location>
    <ligand>
        <name>pyridoxal 5'-phosphate</name>
        <dbReference type="ChEBI" id="CHEBI:597326"/>
    </ligand>
</feature>
<feature type="binding site" evidence="1">
    <location>
        <begin position="204"/>
        <end position="206"/>
    </location>
    <ligand>
        <name>pyridoxal 5'-phosphate</name>
        <dbReference type="ChEBI" id="CHEBI:597326"/>
    </ligand>
</feature>
<feature type="binding site" evidence="1">
    <location>
        <position position="244"/>
    </location>
    <ligand>
        <name>pyridoxal 5'-phosphate</name>
        <dbReference type="ChEBI" id="CHEBI:597326"/>
    </ligand>
</feature>
<feature type="binding site" description="via persulfide group" evidence="1">
    <location>
        <position position="329"/>
    </location>
    <ligand>
        <name>[2Fe-2S] cluster</name>
        <dbReference type="ChEBI" id="CHEBI:190135"/>
        <note>ligand shared with IscU</note>
    </ligand>
</feature>
<feature type="modified residue" description="N6-(pyridoxal phosphate)lysine" evidence="1">
    <location>
        <position position="207"/>
    </location>
</feature>
<accession>Q1H361</accession>
<keyword id="KW-0001">2Fe-2S</keyword>
<keyword id="KW-0963">Cytoplasm</keyword>
<keyword id="KW-0408">Iron</keyword>
<keyword id="KW-0411">Iron-sulfur</keyword>
<keyword id="KW-0479">Metal-binding</keyword>
<keyword id="KW-0663">Pyridoxal phosphate</keyword>
<keyword id="KW-1185">Reference proteome</keyword>
<keyword id="KW-0808">Transferase</keyword>
<sequence length="405" mass="45006">MTVRTPIYLDYSATTPIDPRVAEKMIPYLTEHFGNPASRSHAFGWTAEKAVENAREEVARLVNADPREIVWTSGATESNNLAIKGAANFYSPSKGKHIVTVQTEHKAVIDTVRELERLGYEATYLIPEPNGLIDLDKFKAALRPDTVLASVMLVNNEIGVIQDIEAIGNICREQGVIFHVDAAQATGKVHIDLQKLPVDLMSFSAHKTYGPKGIGALYVRRKPRVRIEAQMHGGGHERGMRSGTLATHQIVGMGEAFRIAREEMDSENVRIRQLRDRLLKGLQEIEEVYVNGDLEHRVAHNLNISFNFVEGESLIMAVKDIAVSSGSACTSASLEPSYVLRALGRSDELAHSSIRFSIGRFTTEEEIDYTIQLMKSKIGKLRELSPLWEMHLEGVDLNAVAWATH</sequence>
<comment type="function">
    <text evidence="1">Master enzyme that delivers sulfur to a number of partners involved in Fe-S cluster assembly, tRNA modification or cofactor biosynthesis. Catalyzes the removal of elemental sulfur atoms from cysteine to produce alanine. Functions as a sulfur delivery protein for Fe-S cluster synthesis onto IscU, an Fe-S scaffold assembly protein, as well as other S acceptor proteins.</text>
</comment>
<comment type="catalytic activity">
    <reaction evidence="1">
        <text>(sulfur carrier)-H + L-cysteine = (sulfur carrier)-SH + L-alanine</text>
        <dbReference type="Rhea" id="RHEA:43892"/>
        <dbReference type="Rhea" id="RHEA-COMP:14737"/>
        <dbReference type="Rhea" id="RHEA-COMP:14739"/>
        <dbReference type="ChEBI" id="CHEBI:29917"/>
        <dbReference type="ChEBI" id="CHEBI:35235"/>
        <dbReference type="ChEBI" id="CHEBI:57972"/>
        <dbReference type="ChEBI" id="CHEBI:64428"/>
        <dbReference type="EC" id="2.8.1.7"/>
    </reaction>
</comment>
<comment type="cofactor">
    <cofactor evidence="1">
        <name>pyridoxal 5'-phosphate</name>
        <dbReference type="ChEBI" id="CHEBI:597326"/>
    </cofactor>
</comment>
<comment type="pathway">
    <text evidence="1">Cofactor biosynthesis; iron-sulfur cluster biosynthesis.</text>
</comment>
<comment type="subunit">
    <text evidence="1">Homodimer. Forms a heterotetramer with IscU, interacts with other sulfur acceptors.</text>
</comment>
<comment type="subcellular location">
    <subcellularLocation>
        <location evidence="1">Cytoplasm</location>
    </subcellularLocation>
</comment>
<comment type="similarity">
    <text evidence="1">Belongs to the class-V pyridoxal-phosphate-dependent aminotransferase family. NifS/IscS subfamily.</text>
</comment>
<dbReference type="EC" id="2.8.1.7" evidence="1"/>
<dbReference type="EMBL" id="CP000284">
    <property type="protein sequence ID" value="ABE49076.1"/>
    <property type="molecule type" value="Genomic_DNA"/>
</dbReference>
<dbReference type="RefSeq" id="WP_011479173.1">
    <property type="nucleotide sequence ID" value="NC_007947.1"/>
</dbReference>
<dbReference type="SMR" id="Q1H361"/>
<dbReference type="STRING" id="265072.Mfla_0808"/>
<dbReference type="KEGG" id="mfa:Mfla_0808"/>
<dbReference type="eggNOG" id="COG1104">
    <property type="taxonomic scope" value="Bacteria"/>
</dbReference>
<dbReference type="HOGENOM" id="CLU_003433_0_2_4"/>
<dbReference type="OrthoDB" id="9808002at2"/>
<dbReference type="UniPathway" id="UPA00266"/>
<dbReference type="Proteomes" id="UP000002440">
    <property type="component" value="Chromosome"/>
</dbReference>
<dbReference type="GO" id="GO:1990221">
    <property type="term" value="C:L-cysteine desulfurase complex"/>
    <property type="evidence" value="ECO:0007669"/>
    <property type="project" value="UniProtKB-ARBA"/>
</dbReference>
<dbReference type="GO" id="GO:0051537">
    <property type="term" value="F:2 iron, 2 sulfur cluster binding"/>
    <property type="evidence" value="ECO:0007669"/>
    <property type="project" value="UniProtKB-UniRule"/>
</dbReference>
<dbReference type="GO" id="GO:0031071">
    <property type="term" value="F:cysteine desulfurase activity"/>
    <property type="evidence" value="ECO:0007669"/>
    <property type="project" value="UniProtKB-UniRule"/>
</dbReference>
<dbReference type="GO" id="GO:0046872">
    <property type="term" value="F:metal ion binding"/>
    <property type="evidence" value="ECO:0007669"/>
    <property type="project" value="UniProtKB-KW"/>
</dbReference>
<dbReference type="GO" id="GO:0030170">
    <property type="term" value="F:pyridoxal phosphate binding"/>
    <property type="evidence" value="ECO:0007669"/>
    <property type="project" value="UniProtKB-UniRule"/>
</dbReference>
<dbReference type="GO" id="GO:0044571">
    <property type="term" value="P:[2Fe-2S] cluster assembly"/>
    <property type="evidence" value="ECO:0007669"/>
    <property type="project" value="UniProtKB-UniRule"/>
</dbReference>
<dbReference type="FunFam" id="3.40.640.10:FF:000003">
    <property type="entry name" value="Cysteine desulfurase IscS"/>
    <property type="match status" value="1"/>
</dbReference>
<dbReference type="FunFam" id="3.90.1150.10:FF:000002">
    <property type="entry name" value="Cysteine desulfurase IscS"/>
    <property type="match status" value="1"/>
</dbReference>
<dbReference type="Gene3D" id="3.90.1150.10">
    <property type="entry name" value="Aspartate Aminotransferase, domain 1"/>
    <property type="match status" value="1"/>
</dbReference>
<dbReference type="Gene3D" id="3.40.640.10">
    <property type="entry name" value="Type I PLP-dependent aspartate aminotransferase-like (Major domain)"/>
    <property type="match status" value="1"/>
</dbReference>
<dbReference type="HAMAP" id="MF_00331">
    <property type="entry name" value="Cys_desulf_IscS"/>
    <property type="match status" value="1"/>
</dbReference>
<dbReference type="InterPro" id="IPR000192">
    <property type="entry name" value="Aminotrans_V_dom"/>
</dbReference>
<dbReference type="InterPro" id="IPR020578">
    <property type="entry name" value="Aminotrans_V_PyrdxlP_BS"/>
</dbReference>
<dbReference type="InterPro" id="IPR010240">
    <property type="entry name" value="Cys_deSase_IscS"/>
</dbReference>
<dbReference type="InterPro" id="IPR016454">
    <property type="entry name" value="Cysteine_dSase"/>
</dbReference>
<dbReference type="InterPro" id="IPR015424">
    <property type="entry name" value="PyrdxlP-dep_Trfase"/>
</dbReference>
<dbReference type="InterPro" id="IPR015421">
    <property type="entry name" value="PyrdxlP-dep_Trfase_major"/>
</dbReference>
<dbReference type="InterPro" id="IPR015422">
    <property type="entry name" value="PyrdxlP-dep_Trfase_small"/>
</dbReference>
<dbReference type="NCBIfam" id="TIGR02006">
    <property type="entry name" value="IscS"/>
    <property type="match status" value="1"/>
</dbReference>
<dbReference type="NCBIfam" id="NF010611">
    <property type="entry name" value="PRK14012.1"/>
    <property type="match status" value="1"/>
</dbReference>
<dbReference type="PANTHER" id="PTHR11601:SF34">
    <property type="entry name" value="CYSTEINE DESULFURASE"/>
    <property type="match status" value="1"/>
</dbReference>
<dbReference type="PANTHER" id="PTHR11601">
    <property type="entry name" value="CYSTEINE DESULFURYLASE FAMILY MEMBER"/>
    <property type="match status" value="1"/>
</dbReference>
<dbReference type="Pfam" id="PF00266">
    <property type="entry name" value="Aminotran_5"/>
    <property type="match status" value="1"/>
</dbReference>
<dbReference type="PIRSF" id="PIRSF005572">
    <property type="entry name" value="NifS"/>
    <property type="match status" value="1"/>
</dbReference>
<dbReference type="SUPFAM" id="SSF53383">
    <property type="entry name" value="PLP-dependent transferases"/>
    <property type="match status" value="1"/>
</dbReference>
<dbReference type="PROSITE" id="PS00595">
    <property type="entry name" value="AA_TRANSFER_CLASS_5"/>
    <property type="match status" value="1"/>
</dbReference>
<name>ISCS_METFK</name>